<name>RL34_METST</name>
<reference key="1">
    <citation type="journal article" date="2006" name="J. Bacteriol.">
        <title>The genome sequence of Methanosphaera stadtmanae reveals why this human intestinal archaeon is restricted to methanol and H2 for methane formation and ATP synthesis.</title>
        <authorList>
            <person name="Fricke W.F."/>
            <person name="Seedorf H."/>
            <person name="Henne A."/>
            <person name="Kruer M."/>
            <person name="Liesegang H."/>
            <person name="Hedderich R."/>
            <person name="Gottschalk G."/>
            <person name="Thauer R.K."/>
        </authorList>
    </citation>
    <scope>NUCLEOTIDE SEQUENCE [LARGE SCALE GENOMIC DNA]</scope>
    <source>
        <strain>ATCC 43021 / DSM 3091 / JCM 11832 / MCB-3</strain>
    </source>
</reference>
<organism>
    <name type="scientific">Methanosphaera stadtmanae (strain ATCC 43021 / DSM 3091 / JCM 11832 / MCB-3)</name>
    <dbReference type="NCBI Taxonomy" id="339860"/>
    <lineage>
        <taxon>Archaea</taxon>
        <taxon>Methanobacteriati</taxon>
        <taxon>Methanobacteriota</taxon>
        <taxon>Methanomada group</taxon>
        <taxon>Methanobacteria</taxon>
        <taxon>Methanobacteriales</taxon>
        <taxon>Methanobacteriaceae</taxon>
        <taxon>Methanosphaera</taxon>
    </lineage>
</organism>
<protein>
    <recommendedName>
        <fullName evidence="1">Large ribosomal subunit protein eL34</fullName>
    </recommendedName>
    <alternativeName>
        <fullName evidence="3">50S ribosomal protein L34e</fullName>
    </alternativeName>
</protein>
<sequence>MSAPRFRNGTFKRTLKRVPGGRKVEHYKKKKPSKHVCAKCGKVLDAVPRGRPYEIRKLSKNQRRPNRPYGGMYCTNCTKEIIKKEARSL</sequence>
<keyword id="KW-1185">Reference proteome</keyword>
<keyword id="KW-0687">Ribonucleoprotein</keyword>
<keyword id="KW-0689">Ribosomal protein</keyword>
<feature type="chain" id="PRO_1000133412" description="Large ribosomal subunit protein eL34">
    <location>
        <begin position="1"/>
        <end position="89"/>
    </location>
</feature>
<feature type="region of interest" description="Disordered" evidence="2">
    <location>
        <begin position="1"/>
        <end position="29"/>
    </location>
</feature>
<feature type="compositionally biased region" description="Basic residues" evidence="2">
    <location>
        <begin position="13"/>
        <end position="29"/>
    </location>
</feature>
<accession>Q2NFY3</accession>
<proteinExistence type="inferred from homology"/>
<evidence type="ECO:0000255" key="1">
    <source>
        <dbReference type="HAMAP-Rule" id="MF_00349"/>
    </source>
</evidence>
<evidence type="ECO:0000256" key="2">
    <source>
        <dbReference type="SAM" id="MobiDB-lite"/>
    </source>
</evidence>
<evidence type="ECO:0000305" key="3"/>
<gene>
    <name evidence="1" type="primary">rpl34e</name>
    <name type="ordered locus">Msp_0882</name>
</gene>
<dbReference type="EMBL" id="CP000102">
    <property type="protein sequence ID" value="ABC57270.1"/>
    <property type="molecule type" value="Genomic_DNA"/>
</dbReference>
<dbReference type="RefSeq" id="WP_011406469.1">
    <property type="nucleotide sequence ID" value="NC_007681.1"/>
</dbReference>
<dbReference type="SMR" id="Q2NFY3"/>
<dbReference type="STRING" id="339860.Msp_0882"/>
<dbReference type="KEGG" id="mst:Msp_0882"/>
<dbReference type="eggNOG" id="arCOG04168">
    <property type="taxonomic scope" value="Archaea"/>
</dbReference>
<dbReference type="HOGENOM" id="CLU_118652_2_0_2"/>
<dbReference type="OrthoDB" id="43096at2157"/>
<dbReference type="Proteomes" id="UP000001931">
    <property type="component" value="Chromosome"/>
</dbReference>
<dbReference type="GO" id="GO:1990904">
    <property type="term" value="C:ribonucleoprotein complex"/>
    <property type="evidence" value="ECO:0007669"/>
    <property type="project" value="UniProtKB-KW"/>
</dbReference>
<dbReference type="GO" id="GO:0005840">
    <property type="term" value="C:ribosome"/>
    <property type="evidence" value="ECO:0007669"/>
    <property type="project" value="UniProtKB-KW"/>
</dbReference>
<dbReference type="GO" id="GO:0003735">
    <property type="term" value="F:structural constituent of ribosome"/>
    <property type="evidence" value="ECO:0007669"/>
    <property type="project" value="InterPro"/>
</dbReference>
<dbReference type="GO" id="GO:0006412">
    <property type="term" value="P:translation"/>
    <property type="evidence" value="ECO:0007669"/>
    <property type="project" value="UniProtKB-UniRule"/>
</dbReference>
<dbReference type="Gene3D" id="6.20.340.10">
    <property type="match status" value="1"/>
</dbReference>
<dbReference type="HAMAP" id="MF_00349">
    <property type="entry name" value="Ribosomal_eL34"/>
    <property type="match status" value="1"/>
</dbReference>
<dbReference type="InterPro" id="IPR008195">
    <property type="entry name" value="Ribosomal_eL34"/>
</dbReference>
<dbReference type="InterPro" id="IPR038562">
    <property type="entry name" value="Ribosomal_eL34_C_sf"/>
</dbReference>
<dbReference type="InterPro" id="IPR047868">
    <property type="entry name" value="Ribosomal_L34e_arc-type"/>
</dbReference>
<dbReference type="NCBIfam" id="NF003143">
    <property type="entry name" value="PRK04059.1"/>
    <property type="match status" value="1"/>
</dbReference>
<dbReference type="PANTHER" id="PTHR10759">
    <property type="entry name" value="60S RIBOSOMAL PROTEIN L34"/>
    <property type="match status" value="1"/>
</dbReference>
<dbReference type="Pfam" id="PF01199">
    <property type="entry name" value="Ribosomal_L34e"/>
    <property type="match status" value="1"/>
</dbReference>
<dbReference type="PRINTS" id="PR01250">
    <property type="entry name" value="RIBOSOMALL34"/>
</dbReference>
<comment type="similarity">
    <text evidence="1">Belongs to the eukaryotic ribosomal protein eL34 family.</text>
</comment>